<comment type="catalytic activity">
    <reaction evidence="1">
        <text>L-histidinol phosphate + 2-oxoglutarate = 3-(imidazol-4-yl)-2-oxopropyl phosphate + L-glutamate</text>
        <dbReference type="Rhea" id="RHEA:23744"/>
        <dbReference type="ChEBI" id="CHEBI:16810"/>
        <dbReference type="ChEBI" id="CHEBI:29985"/>
        <dbReference type="ChEBI" id="CHEBI:57766"/>
        <dbReference type="ChEBI" id="CHEBI:57980"/>
        <dbReference type="EC" id="2.6.1.9"/>
    </reaction>
</comment>
<comment type="cofactor">
    <cofactor evidence="1">
        <name>pyridoxal 5'-phosphate</name>
        <dbReference type="ChEBI" id="CHEBI:597326"/>
    </cofactor>
</comment>
<comment type="pathway">
    <text evidence="1">Amino-acid biosynthesis; L-histidine biosynthesis; L-histidine from 5-phospho-alpha-D-ribose 1-diphosphate: step 7/9.</text>
</comment>
<comment type="subunit">
    <text evidence="1">Homodimer.</text>
</comment>
<comment type="similarity">
    <text evidence="1">Belongs to the class-II pyridoxal-phosphate-dependent aminotransferase family. Histidinol-phosphate aminotransferase subfamily.</text>
</comment>
<sequence>MKSVRSFIRNDILAMSAYKITDVPPGFAKLDAMESPAHPFEGHEALMREWRAQLASAPIHLYPNPSGCGLQEALRSAFDIPDCAAVALGNGSDELIQFITMLTAKPGAAMLAAEPGFIMYRHNAALYGMDYVGVPLNGDFTLNLPAVLEAVRKHRPALTFIAYPNNPTGVCFTRAEIEAAIEASDGIVVVDEAYGAFNGDSFLPQAGRIPNLIVLRTLSKIGFAGLRIGYATGCPEVIGELQKILPPYNMNQLSLTTAKLALQHYGIISANIDSLKNERERMFAELGKICRLNAFPSQANFITIRVPDADLLFDTLKQNRILVKKLHGAHPLLEHCLRITIGSSAQNDAVLDVIRRLYR</sequence>
<gene>
    <name evidence="1" type="primary">hisC</name>
    <name type="ordered locus">NGK_0266</name>
</gene>
<organism>
    <name type="scientific">Neisseria gonorrhoeae (strain NCCP11945)</name>
    <dbReference type="NCBI Taxonomy" id="521006"/>
    <lineage>
        <taxon>Bacteria</taxon>
        <taxon>Pseudomonadati</taxon>
        <taxon>Pseudomonadota</taxon>
        <taxon>Betaproteobacteria</taxon>
        <taxon>Neisseriales</taxon>
        <taxon>Neisseriaceae</taxon>
        <taxon>Neisseria</taxon>
    </lineage>
</organism>
<name>HIS8_NEIG2</name>
<reference key="1">
    <citation type="journal article" date="2008" name="J. Bacteriol.">
        <title>Complete genome sequence of Neisseria gonorrhoeae NCCP11945.</title>
        <authorList>
            <person name="Chung G.T."/>
            <person name="Yoo J.S."/>
            <person name="Oh H.B."/>
            <person name="Lee Y.S."/>
            <person name="Cha S.H."/>
            <person name="Kim S.J."/>
            <person name="Yoo C.K."/>
        </authorList>
    </citation>
    <scope>NUCLEOTIDE SEQUENCE [LARGE SCALE GENOMIC DNA]</scope>
    <source>
        <strain>NCCP11945</strain>
    </source>
</reference>
<proteinExistence type="inferred from homology"/>
<accession>B4RJ05</accession>
<dbReference type="EC" id="2.6.1.9" evidence="1"/>
<dbReference type="EMBL" id="CP001050">
    <property type="protein sequence ID" value="ACF28960.1"/>
    <property type="molecule type" value="Genomic_DNA"/>
</dbReference>
<dbReference type="RefSeq" id="WP_003689699.1">
    <property type="nucleotide sequence ID" value="NC_011035.1"/>
</dbReference>
<dbReference type="SMR" id="B4RJ05"/>
<dbReference type="GeneID" id="66752478"/>
<dbReference type="KEGG" id="ngk:NGK_0266"/>
<dbReference type="HOGENOM" id="CLU_017584_3_1_4"/>
<dbReference type="UniPathway" id="UPA00031">
    <property type="reaction ID" value="UER00012"/>
</dbReference>
<dbReference type="Proteomes" id="UP000002564">
    <property type="component" value="Chromosome"/>
</dbReference>
<dbReference type="GO" id="GO:0004400">
    <property type="term" value="F:histidinol-phosphate transaminase activity"/>
    <property type="evidence" value="ECO:0007669"/>
    <property type="project" value="UniProtKB-UniRule"/>
</dbReference>
<dbReference type="GO" id="GO:0030170">
    <property type="term" value="F:pyridoxal phosphate binding"/>
    <property type="evidence" value="ECO:0007669"/>
    <property type="project" value="InterPro"/>
</dbReference>
<dbReference type="GO" id="GO:0000105">
    <property type="term" value="P:L-histidine biosynthetic process"/>
    <property type="evidence" value="ECO:0007669"/>
    <property type="project" value="UniProtKB-UniRule"/>
</dbReference>
<dbReference type="CDD" id="cd00609">
    <property type="entry name" value="AAT_like"/>
    <property type="match status" value="1"/>
</dbReference>
<dbReference type="Gene3D" id="3.90.1150.10">
    <property type="entry name" value="Aspartate Aminotransferase, domain 1"/>
    <property type="match status" value="1"/>
</dbReference>
<dbReference type="Gene3D" id="3.40.640.10">
    <property type="entry name" value="Type I PLP-dependent aspartate aminotransferase-like (Major domain)"/>
    <property type="match status" value="1"/>
</dbReference>
<dbReference type="HAMAP" id="MF_01023">
    <property type="entry name" value="HisC_aminotrans_2"/>
    <property type="match status" value="1"/>
</dbReference>
<dbReference type="InterPro" id="IPR004839">
    <property type="entry name" value="Aminotransferase_I/II_large"/>
</dbReference>
<dbReference type="InterPro" id="IPR005861">
    <property type="entry name" value="HisP_aminotrans"/>
</dbReference>
<dbReference type="InterPro" id="IPR015424">
    <property type="entry name" value="PyrdxlP-dep_Trfase"/>
</dbReference>
<dbReference type="InterPro" id="IPR015421">
    <property type="entry name" value="PyrdxlP-dep_Trfase_major"/>
</dbReference>
<dbReference type="InterPro" id="IPR015422">
    <property type="entry name" value="PyrdxlP-dep_Trfase_small"/>
</dbReference>
<dbReference type="NCBIfam" id="TIGR01141">
    <property type="entry name" value="hisC"/>
    <property type="match status" value="1"/>
</dbReference>
<dbReference type="PANTHER" id="PTHR42885:SF2">
    <property type="entry name" value="HISTIDINOL-PHOSPHATE AMINOTRANSFERASE"/>
    <property type="match status" value="1"/>
</dbReference>
<dbReference type="PANTHER" id="PTHR42885">
    <property type="entry name" value="HISTIDINOL-PHOSPHATE AMINOTRANSFERASE-RELATED"/>
    <property type="match status" value="1"/>
</dbReference>
<dbReference type="Pfam" id="PF00155">
    <property type="entry name" value="Aminotran_1_2"/>
    <property type="match status" value="1"/>
</dbReference>
<dbReference type="SUPFAM" id="SSF53383">
    <property type="entry name" value="PLP-dependent transferases"/>
    <property type="match status" value="1"/>
</dbReference>
<protein>
    <recommendedName>
        <fullName evidence="1">Histidinol-phosphate aminotransferase</fullName>
        <ecNumber evidence="1">2.6.1.9</ecNumber>
    </recommendedName>
    <alternativeName>
        <fullName evidence="1">Imidazole acetol-phosphate transaminase</fullName>
    </alternativeName>
</protein>
<feature type="chain" id="PRO_1000135411" description="Histidinol-phosphate aminotransferase">
    <location>
        <begin position="1"/>
        <end position="359"/>
    </location>
</feature>
<feature type="modified residue" description="N6-(pyridoxal phosphate)lysine" evidence="1">
    <location>
        <position position="220"/>
    </location>
</feature>
<evidence type="ECO:0000255" key="1">
    <source>
        <dbReference type="HAMAP-Rule" id="MF_01023"/>
    </source>
</evidence>
<keyword id="KW-0028">Amino-acid biosynthesis</keyword>
<keyword id="KW-0032">Aminotransferase</keyword>
<keyword id="KW-0368">Histidine biosynthesis</keyword>
<keyword id="KW-0663">Pyridoxal phosphate</keyword>
<keyword id="KW-0808">Transferase</keyword>